<organism>
    <name type="scientific">Vitis vinifera</name>
    <name type="common">Grape</name>
    <dbReference type="NCBI Taxonomy" id="29760"/>
    <lineage>
        <taxon>Eukaryota</taxon>
        <taxon>Viridiplantae</taxon>
        <taxon>Streptophyta</taxon>
        <taxon>Embryophyta</taxon>
        <taxon>Tracheophyta</taxon>
        <taxon>Spermatophyta</taxon>
        <taxon>Magnoliopsida</taxon>
        <taxon>eudicotyledons</taxon>
        <taxon>Gunneridae</taxon>
        <taxon>Pentapetalae</taxon>
        <taxon>rosids</taxon>
        <taxon>Vitales</taxon>
        <taxon>Vitaceae</taxon>
        <taxon>Viteae</taxon>
        <taxon>Vitis</taxon>
    </lineage>
</organism>
<gene>
    <name type="ordered locus">VIT_17s0000g00560</name>
    <name type="ORF">GSVIVT00018013001</name>
    <name type="ORF">GSVIVT01008618001</name>
    <name type="ORF">VIT_00008618001</name>
    <name type="ORF">Vv17s0000g00560</name>
</gene>
<keyword id="KW-1003">Cell membrane</keyword>
<keyword id="KW-0472">Membrane</keyword>
<keyword id="KW-1185">Reference proteome</keyword>
<keyword id="KW-0812">Transmembrane</keyword>
<keyword id="KW-1133">Transmembrane helix</keyword>
<protein>
    <recommendedName>
        <fullName>CASP-like protein 1F1</fullName>
        <shortName>VvCASPL1F1</shortName>
    </recommendedName>
</protein>
<feature type="chain" id="PRO_0000370309" description="CASP-like protein 1F1">
    <location>
        <begin position="1"/>
        <end position="206"/>
    </location>
</feature>
<feature type="topological domain" description="Cytoplasmic" evidence="2">
    <location>
        <begin position="1"/>
        <end position="43"/>
    </location>
</feature>
<feature type="transmembrane region" description="Helical" evidence="2">
    <location>
        <begin position="44"/>
        <end position="64"/>
    </location>
</feature>
<feature type="topological domain" description="Extracellular" evidence="2">
    <location>
        <begin position="65"/>
        <end position="92"/>
    </location>
</feature>
<feature type="transmembrane region" description="Helical" evidence="2">
    <location>
        <begin position="93"/>
        <end position="113"/>
    </location>
</feature>
<feature type="topological domain" description="Cytoplasmic" evidence="2">
    <location>
        <begin position="114"/>
        <end position="124"/>
    </location>
</feature>
<feature type="transmembrane region" description="Helical" evidence="2">
    <location>
        <begin position="125"/>
        <end position="145"/>
    </location>
</feature>
<feature type="topological domain" description="Extracellular" evidence="2">
    <location>
        <begin position="146"/>
        <end position="177"/>
    </location>
</feature>
<feature type="transmembrane region" description="Helical" evidence="2">
    <location>
        <begin position="178"/>
        <end position="198"/>
    </location>
</feature>
<feature type="topological domain" description="Cytoplasmic" evidence="2">
    <location>
        <begin position="199"/>
        <end position="206"/>
    </location>
</feature>
<accession>A7PHN8</accession>
<accession>D7SH52</accession>
<proteinExistence type="evidence at transcript level"/>
<comment type="subunit">
    <text evidence="1">Homodimer and heterodimers.</text>
</comment>
<comment type="subcellular location">
    <subcellularLocation>
        <location evidence="1">Cell membrane</location>
        <topology evidence="1">Multi-pass membrane protein</topology>
    </subcellularLocation>
</comment>
<comment type="similarity">
    <text evidence="3">Belongs to the Casparian strip membrane proteins (CASP) family.</text>
</comment>
<name>CSPL4_VITVI</name>
<reference key="1">
    <citation type="journal article" date="2007" name="Nature">
        <title>The grapevine genome sequence suggests ancestral hexaploidization in major angiosperm phyla.</title>
        <authorList>
            <person name="Jaillon O."/>
            <person name="Aury J.-M."/>
            <person name="Noel B."/>
            <person name="Policriti A."/>
            <person name="Clepet C."/>
            <person name="Casagrande A."/>
            <person name="Choisne N."/>
            <person name="Aubourg S."/>
            <person name="Vitulo N."/>
            <person name="Jubin C."/>
            <person name="Vezzi A."/>
            <person name="Legeai F."/>
            <person name="Hugueney P."/>
            <person name="Dasilva C."/>
            <person name="Horner D."/>
            <person name="Mica E."/>
            <person name="Jublot D."/>
            <person name="Poulain J."/>
            <person name="Bruyere C."/>
            <person name="Billault A."/>
            <person name="Segurens B."/>
            <person name="Gouyvenoux M."/>
            <person name="Ugarte E."/>
            <person name="Cattonaro F."/>
            <person name="Anthouard V."/>
            <person name="Vico V."/>
            <person name="Del Fabbro C."/>
            <person name="Alaux M."/>
            <person name="Di Gaspero G."/>
            <person name="Dumas V."/>
            <person name="Felice N."/>
            <person name="Paillard S."/>
            <person name="Juman I."/>
            <person name="Moroldo M."/>
            <person name="Scalabrin S."/>
            <person name="Canaguier A."/>
            <person name="Le Clainche I."/>
            <person name="Malacrida G."/>
            <person name="Durand E."/>
            <person name="Pesole G."/>
            <person name="Laucou V."/>
            <person name="Chatelet P."/>
            <person name="Merdinoglu D."/>
            <person name="Delledonne M."/>
            <person name="Pezzotti M."/>
            <person name="Lecharny A."/>
            <person name="Scarpelli C."/>
            <person name="Artiguenave F."/>
            <person name="Pe M.E."/>
            <person name="Valle G."/>
            <person name="Morgante M."/>
            <person name="Caboche M."/>
            <person name="Adam-Blondon A.-F."/>
            <person name="Weissenbach J."/>
            <person name="Quetier F."/>
            <person name="Wincker P."/>
        </authorList>
    </citation>
    <scope>NUCLEOTIDE SEQUENCE [LARGE SCALE GENOMIC DNA]</scope>
    <source>
        <strain>cv. Pinot noir / PN40024</strain>
    </source>
</reference>
<reference key="2">
    <citation type="journal article" date="2014" name="Plant Physiol.">
        <title>Functional and evolutionary analysis of the CASPARIAN STRIP MEMBRANE DOMAIN PROTEIN family.</title>
        <authorList>
            <person name="Roppolo D."/>
            <person name="Boeckmann B."/>
            <person name="Pfister A."/>
            <person name="Boutet E."/>
            <person name="Rubio M.C."/>
            <person name="Denervaud-Tendon V."/>
            <person name="Vermeer J.E."/>
            <person name="Gheyselinck J."/>
            <person name="Xenarios I."/>
            <person name="Geldner N."/>
        </authorList>
    </citation>
    <scope>GENE FAMILY</scope>
    <scope>NOMENCLATURE</scope>
</reference>
<dbReference type="EMBL" id="FN597042">
    <property type="protein sequence ID" value="CBI15732.3"/>
    <property type="molecule type" value="Genomic_DNA"/>
</dbReference>
<dbReference type="PaxDb" id="29760-VIT_17s0000g00560.t01"/>
<dbReference type="EnsemblPlants" id="Vitvi17g00053_t001">
    <property type="protein sequence ID" value="Vitvi17g00053_P001"/>
    <property type="gene ID" value="Vitvi17g00053"/>
</dbReference>
<dbReference type="Gramene" id="Vitvi17g00053_t001">
    <property type="protein sequence ID" value="Vitvi17g00053_P001"/>
    <property type="gene ID" value="Vitvi17g00053"/>
</dbReference>
<dbReference type="eggNOG" id="ENOG502S695">
    <property type="taxonomic scope" value="Eukaryota"/>
</dbReference>
<dbReference type="HOGENOM" id="CLU_066104_3_0_1"/>
<dbReference type="InParanoid" id="A7PHN8"/>
<dbReference type="OMA" id="KMGWIAV"/>
<dbReference type="OrthoDB" id="1904499at2759"/>
<dbReference type="Proteomes" id="UP000009183">
    <property type="component" value="Chromosome 17"/>
</dbReference>
<dbReference type="GO" id="GO:0005886">
    <property type="term" value="C:plasma membrane"/>
    <property type="evidence" value="ECO:0007669"/>
    <property type="project" value="UniProtKB-SubCell"/>
</dbReference>
<dbReference type="InterPro" id="IPR006459">
    <property type="entry name" value="CASP/CASPL"/>
</dbReference>
<dbReference type="InterPro" id="IPR006702">
    <property type="entry name" value="CASP_dom"/>
</dbReference>
<dbReference type="InterPro" id="IPR044173">
    <property type="entry name" value="CASPL"/>
</dbReference>
<dbReference type="NCBIfam" id="TIGR01569">
    <property type="entry name" value="A_tha_TIGR01569"/>
    <property type="match status" value="1"/>
</dbReference>
<dbReference type="PANTHER" id="PTHR36488">
    <property type="entry name" value="CASP-LIKE PROTEIN 1U1"/>
    <property type="match status" value="1"/>
</dbReference>
<dbReference type="PANTHER" id="PTHR36488:SF8">
    <property type="entry name" value="CASP-LIKE PROTEIN 1U1"/>
    <property type="match status" value="1"/>
</dbReference>
<dbReference type="Pfam" id="PF04535">
    <property type="entry name" value="CASP_dom"/>
    <property type="match status" value="1"/>
</dbReference>
<evidence type="ECO:0000250" key="1"/>
<evidence type="ECO:0000255" key="2"/>
<evidence type="ECO:0000305" key="3"/>
<sequence>MCFQFSILYTCYLAHFGVFPRKYLVMAGIEAKFQQNPPLGTHKLFLGAHICLRILTVTATLTAAWMMITSKQTVEVYGIQVEAKYSYSSAFKFFSYANAIACGCSVLTLFPAFSLFYRGSTPMKFFFLFLHDLCMMSLVLAGCAAATAIGYVGRYGNNHAGWMAICDQFDEYCNRIRLSLMFSYLAFVFILMLTIMSANKSREIRV</sequence>